<accession>Q9PI58</accession>
<accession>Q0PB63</accession>
<gene>
    <name evidence="1" type="primary">rpmB</name>
    <name type="ordered locus">Cj0450c</name>
</gene>
<keyword id="KW-1185">Reference proteome</keyword>
<keyword id="KW-0687">Ribonucleoprotein</keyword>
<keyword id="KW-0689">Ribosomal protein</keyword>
<reference key="1">
    <citation type="journal article" date="2000" name="Nature">
        <title>The genome sequence of the food-borne pathogen Campylobacter jejuni reveals hypervariable sequences.</title>
        <authorList>
            <person name="Parkhill J."/>
            <person name="Wren B.W."/>
            <person name="Mungall K.L."/>
            <person name="Ketley J.M."/>
            <person name="Churcher C.M."/>
            <person name="Basham D."/>
            <person name="Chillingworth T."/>
            <person name="Davies R.M."/>
            <person name="Feltwell T."/>
            <person name="Holroyd S."/>
            <person name="Jagels K."/>
            <person name="Karlyshev A.V."/>
            <person name="Moule S."/>
            <person name="Pallen M.J."/>
            <person name="Penn C.W."/>
            <person name="Quail M.A."/>
            <person name="Rajandream M.A."/>
            <person name="Rutherford K.M."/>
            <person name="van Vliet A.H.M."/>
            <person name="Whitehead S."/>
            <person name="Barrell B.G."/>
        </authorList>
    </citation>
    <scope>NUCLEOTIDE SEQUENCE [LARGE SCALE GENOMIC DNA]</scope>
    <source>
        <strain>ATCC 700819 / NCTC 11168</strain>
    </source>
</reference>
<proteinExistence type="inferred from homology"/>
<dbReference type="EMBL" id="AL111168">
    <property type="protein sequence ID" value="CAL34598.1"/>
    <property type="molecule type" value="Genomic_DNA"/>
</dbReference>
<dbReference type="PIR" id="E81389">
    <property type="entry name" value="E81389"/>
</dbReference>
<dbReference type="RefSeq" id="WP_002854974.1">
    <property type="nucleotide sequence ID" value="NZ_SZUC01000002.1"/>
</dbReference>
<dbReference type="RefSeq" id="YP_002343884.1">
    <property type="nucleotide sequence ID" value="NC_002163.1"/>
</dbReference>
<dbReference type="SMR" id="Q9PI58"/>
<dbReference type="IntAct" id="Q9PI58">
    <property type="interactions" value="9"/>
</dbReference>
<dbReference type="STRING" id="192222.Cj0450c"/>
<dbReference type="PaxDb" id="192222-Cj0450c"/>
<dbReference type="EnsemblBacteria" id="CAL34598">
    <property type="protein sequence ID" value="CAL34598"/>
    <property type="gene ID" value="Cj0450c"/>
</dbReference>
<dbReference type="GeneID" id="904773"/>
<dbReference type="KEGG" id="cje:Cj0450c"/>
<dbReference type="PATRIC" id="fig|192222.6.peg.441"/>
<dbReference type="eggNOG" id="COG0227">
    <property type="taxonomic scope" value="Bacteria"/>
</dbReference>
<dbReference type="HOGENOM" id="CLU_064548_7_2_7"/>
<dbReference type="OrthoDB" id="9805609at2"/>
<dbReference type="Proteomes" id="UP000000799">
    <property type="component" value="Chromosome"/>
</dbReference>
<dbReference type="GO" id="GO:1990904">
    <property type="term" value="C:ribonucleoprotein complex"/>
    <property type="evidence" value="ECO:0007669"/>
    <property type="project" value="UniProtKB-KW"/>
</dbReference>
<dbReference type="GO" id="GO:0005840">
    <property type="term" value="C:ribosome"/>
    <property type="evidence" value="ECO:0007669"/>
    <property type="project" value="UniProtKB-KW"/>
</dbReference>
<dbReference type="GO" id="GO:0003735">
    <property type="term" value="F:structural constituent of ribosome"/>
    <property type="evidence" value="ECO:0007669"/>
    <property type="project" value="InterPro"/>
</dbReference>
<dbReference type="GO" id="GO:0006412">
    <property type="term" value="P:translation"/>
    <property type="evidence" value="ECO:0007669"/>
    <property type="project" value="UniProtKB-UniRule"/>
</dbReference>
<dbReference type="Gene3D" id="2.20.150.30">
    <property type="match status" value="1"/>
</dbReference>
<dbReference type="Gene3D" id="2.30.170.40">
    <property type="entry name" value="Ribosomal protein L28/L24"/>
    <property type="match status" value="1"/>
</dbReference>
<dbReference type="HAMAP" id="MF_00373">
    <property type="entry name" value="Ribosomal_bL28"/>
    <property type="match status" value="1"/>
</dbReference>
<dbReference type="InterPro" id="IPR050096">
    <property type="entry name" value="Bacterial_rp_bL28"/>
</dbReference>
<dbReference type="InterPro" id="IPR026569">
    <property type="entry name" value="Ribosomal_bL28"/>
</dbReference>
<dbReference type="InterPro" id="IPR034704">
    <property type="entry name" value="Ribosomal_bL28/bL31-like_sf"/>
</dbReference>
<dbReference type="InterPro" id="IPR001383">
    <property type="entry name" value="Ribosomal_bL28_bact-type"/>
</dbReference>
<dbReference type="InterPro" id="IPR037147">
    <property type="entry name" value="Ribosomal_bL28_sf"/>
</dbReference>
<dbReference type="NCBIfam" id="TIGR00009">
    <property type="entry name" value="L28"/>
    <property type="match status" value="1"/>
</dbReference>
<dbReference type="PANTHER" id="PTHR39080">
    <property type="entry name" value="50S RIBOSOMAL PROTEIN L28"/>
    <property type="match status" value="1"/>
</dbReference>
<dbReference type="PANTHER" id="PTHR39080:SF1">
    <property type="entry name" value="LARGE RIBOSOMAL SUBUNIT PROTEIN BL28A"/>
    <property type="match status" value="1"/>
</dbReference>
<dbReference type="Pfam" id="PF00830">
    <property type="entry name" value="Ribosomal_L28"/>
    <property type="match status" value="1"/>
</dbReference>
<dbReference type="SUPFAM" id="SSF143800">
    <property type="entry name" value="L28p-like"/>
    <property type="match status" value="1"/>
</dbReference>
<feature type="chain" id="PRO_0000178449" description="Large ribosomal subunit protein bL28">
    <location>
        <begin position="1"/>
        <end position="64"/>
    </location>
</feature>
<evidence type="ECO:0000255" key="1">
    <source>
        <dbReference type="HAMAP-Rule" id="MF_00373"/>
    </source>
</evidence>
<evidence type="ECO:0000305" key="2"/>
<sequence>MARVCQITGKGPMVGNNVSHANNKTKRRFLPNLRTVRVTLEDGTTRKMRIAASTLRTLKKQNSK</sequence>
<organism>
    <name type="scientific">Campylobacter jejuni subsp. jejuni serotype O:2 (strain ATCC 700819 / NCTC 11168)</name>
    <dbReference type="NCBI Taxonomy" id="192222"/>
    <lineage>
        <taxon>Bacteria</taxon>
        <taxon>Pseudomonadati</taxon>
        <taxon>Campylobacterota</taxon>
        <taxon>Epsilonproteobacteria</taxon>
        <taxon>Campylobacterales</taxon>
        <taxon>Campylobacteraceae</taxon>
        <taxon>Campylobacter</taxon>
    </lineage>
</organism>
<name>RL28_CAMJE</name>
<comment type="similarity">
    <text evidence="1">Belongs to the bacterial ribosomal protein bL28 family.</text>
</comment>
<protein>
    <recommendedName>
        <fullName evidence="1">Large ribosomal subunit protein bL28</fullName>
    </recommendedName>
    <alternativeName>
        <fullName evidence="2">50S ribosomal protein L28</fullName>
    </alternativeName>
</protein>